<comment type="function">
    <text evidence="1 3">Since they lack a putative transactivation domain, the small Mafs behave as transcriptional repressors when they dimerize among themselves (By similarity). However, they act as transcriptional activators by dimerizing with other (usually larger) basic-zipper proteins, such as NFE2, NFE2L1/NRF1, NFE2L2/NRF2 and NFE2L3/NRF3, and recruiting them to specific DNA-binding sites (PubMed:9240432). Small Maf proteins heterodimerize with Fos and may act as competitive repressors of the NF-E2 transcription factor (By similarity).</text>
</comment>
<comment type="subunit">
    <text evidence="1 3">Homodimer or heterodimer (By similarity). It can form high affinity heterodimers with members of the CNC-bZIP family such as NFE2, NFE2L1/NRF1, NFE2L2/NRF2 and NFE2L3/NRF3 (PubMed:9240432).</text>
</comment>
<comment type="interaction">
    <interactant intactId="EBI-15740843">
        <id>Q61827</id>
    </interactant>
    <interactant intactId="EBI-2552417">
        <id>P97302</id>
        <label>Bach1</label>
    </interactant>
    <organismsDiffer>false</organismsDiffer>
    <experiments>5</experiments>
</comment>
<comment type="subcellular location">
    <subcellularLocation>
        <location>Nucleus</location>
    </subcellularLocation>
</comment>
<comment type="tissue specificity">
    <text>Highly expressed in heart, skeletal muscle and placenta. Also expressed in erythroid cells.</text>
</comment>
<comment type="similarity">
    <text evidence="4">Belongs to the bZIP family. Maf subfamily.</text>
</comment>
<feature type="chain" id="PRO_0000076504" description="Transcription factor MafK">
    <location>
        <begin position="1"/>
        <end position="156"/>
    </location>
</feature>
<feature type="domain" description="bZIP" evidence="2">
    <location>
        <begin position="51"/>
        <end position="114"/>
    </location>
</feature>
<feature type="region of interest" description="Basic motif" evidence="2">
    <location>
        <begin position="51"/>
        <end position="76"/>
    </location>
</feature>
<feature type="region of interest" description="Leucine-zipper" evidence="2">
    <location>
        <begin position="79"/>
        <end position="93"/>
    </location>
</feature>
<feature type="modified residue" description="Phosphoserine" evidence="5">
    <location>
        <position position="25"/>
    </location>
</feature>
<feature type="cross-link" description="Glycyl lysine isopeptide (Lys-Gly) (interchain with G-Cter in SUMO2)" evidence="1">
    <location>
        <position position="130"/>
    </location>
</feature>
<feature type="sequence conflict" description="In Ref. 2; AAC52132." evidence="4" ref="2">
    <original>EL</original>
    <variation>DV</variation>
    <location>
        <begin position="36"/>
        <end position="37"/>
    </location>
</feature>
<organism>
    <name type="scientific">Mus musculus</name>
    <name type="common">Mouse</name>
    <dbReference type="NCBI Taxonomy" id="10090"/>
    <lineage>
        <taxon>Eukaryota</taxon>
        <taxon>Metazoa</taxon>
        <taxon>Chordata</taxon>
        <taxon>Craniata</taxon>
        <taxon>Vertebrata</taxon>
        <taxon>Euteleostomi</taxon>
        <taxon>Mammalia</taxon>
        <taxon>Eutheria</taxon>
        <taxon>Euarchontoglires</taxon>
        <taxon>Glires</taxon>
        <taxon>Rodentia</taxon>
        <taxon>Myomorpha</taxon>
        <taxon>Muroidea</taxon>
        <taxon>Muridae</taxon>
        <taxon>Murinae</taxon>
        <taxon>Mus</taxon>
        <taxon>Mus</taxon>
    </lineage>
</organism>
<name>MAFK_MOUSE</name>
<sequence>MTTNPKPNKALKVKKEAGENAPVLSDDELVSMSVRELNQHLRGLTKEEVTRLKQRRRTLKNRGYAASCRIKRVTQKEELERQRVELQQEVEKLARENSSMRLELDALRSKYEALQTFARTVARGPVTPTKVATTSVITIVKSAELSSTSVPFSAAS</sequence>
<dbReference type="EMBL" id="D42124">
    <property type="protein sequence ID" value="BAA07704.1"/>
    <property type="molecule type" value="mRNA"/>
</dbReference>
<dbReference type="EMBL" id="U01036">
    <property type="protein sequence ID" value="AAC52132.1"/>
    <property type="molecule type" value="mRNA"/>
</dbReference>
<dbReference type="EMBL" id="BC014295">
    <property type="protein sequence ID" value="AAH14295.1"/>
    <property type="molecule type" value="mRNA"/>
</dbReference>
<dbReference type="CCDS" id="CCDS19814.1"/>
<dbReference type="PIR" id="A49391">
    <property type="entry name" value="A49391"/>
</dbReference>
<dbReference type="PIR" id="A56124">
    <property type="entry name" value="A56124"/>
</dbReference>
<dbReference type="RefSeq" id="NP_034887.1">
    <property type="nucleotide sequence ID" value="NM_010757.2"/>
</dbReference>
<dbReference type="RefSeq" id="XP_006504716.1">
    <property type="nucleotide sequence ID" value="XM_006504653.5"/>
</dbReference>
<dbReference type="SMR" id="Q61827"/>
<dbReference type="BioGRID" id="201284">
    <property type="interactions" value="6"/>
</dbReference>
<dbReference type="DIP" id="DIP-46345N"/>
<dbReference type="FunCoup" id="Q61827">
    <property type="interactions" value="2695"/>
</dbReference>
<dbReference type="IntAct" id="Q61827">
    <property type="interactions" value="3"/>
</dbReference>
<dbReference type="STRING" id="10090.ENSMUSP00000106460"/>
<dbReference type="GlyGen" id="Q61827">
    <property type="glycosylation" value="5 sites, 1 O-linked glycan (5 sites)"/>
</dbReference>
<dbReference type="iPTMnet" id="Q61827"/>
<dbReference type="PhosphoSitePlus" id="Q61827"/>
<dbReference type="PaxDb" id="10090-ENSMUSP00000018287"/>
<dbReference type="ProteomicsDB" id="252714"/>
<dbReference type="Pumba" id="Q61827"/>
<dbReference type="Antibodypedia" id="24241">
    <property type="antibodies" value="160 antibodies from 25 providers"/>
</dbReference>
<dbReference type="DNASU" id="17135"/>
<dbReference type="Ensembl" id="ENSMUST00000018287.10">
    <property type="protein sequence ID" value="ENSMUSP00000018287.4"/>
    <property type="gene ID" value="ENSMUSG00000018143.11"/>
</dbReference>
<dbReference type="Ensembl" id="ENSMUST00000110836.2">
    <property type="protein sequence ID" value="ENSMUSP00000106460.2"/>
    <property type="gene ID" value="ENSMUSG00000018143.11"/>
</dbReference>
<dbReference type="GeneID" id="17135"/>
<dbReference type="KEGG" id="mmu:17135"/>
<dbReference type="UCSC" id="uc009ahd.1">
    <property type="organism name" value="mouse"/>
</dbReference>
<dbReference type="AGR" id="MGI:99951"/>
<dbReference type="CTD" id="7975"/>
<dbReference type="MGI" id="MGI:99951">
    <property type="gene designation" value="Mafk"/>
</dbReference>
<dbReference type="VEuPathDB" id="HostDB:ENSMUSG00000018143"/>
<dbReference type="eggNOG" id="KOG4196">
    <property type="taxonomic scope" value="Eukaryota"/>
</dbReference>
<dbReference type="GeneTree" id="ENSGT00940000160044"/>
<dbReference type="HOGENOM" id="CLU_112948_0_0_1"/>
<dbReference type="InParanoid" id="Q61827"/>
<dbReference type="OMA" id="RSIKMDP"/>
<dbReference type="OrthoDB" id="5974330at2759"/>
<dbReference type="PhylomeDB" id="Q61827"/>
<dbReference type="TreeFam" id="TF325689"/>
<dbReference type="Reactome" id="R-MMU-9707616">
    <property type="pathway name" value="Heme signaling"/>
</dbReference>
<dbReference type="Reactome" id="R-MMU-9708530">
    <property type="pathway name" value="Regulation of BACH1 activity"/>
</dbReference>
<dbReference type="Reactome" id="R-MMU-983231">
    <property type="pathway name" value="Factors involved in megakaryocyte development and platelet production"/>
</dbReference>
<dbReference type="BioGRID-ORCS" id="17135">
    <property type="hits" value="2 hits in 79 CRISPR screens"/>
</dbReference>
<dbReference type="PRO" id="PR:Q61827"/>
<dbReference type="Proteomes" id="UP000000589">
    <property type="component" value="Chromosome 5"/>
</dbReference>
<dbReference type="RNAct" id="Q61827">
    <property type="molecule type" value="protein"/>
</dbReference>
<dbReference type="Bgee" id="ENSMUSG00000018143">
    <property type="expression patterns" value="Expressed in granulocyte and 206 other cell types or tissues"/>
</dbReference>
<dbReference type="ExpressionAtlas" id="Q61827">
    <property type="expression patterns" value="baseline and differential"/>
</dbReference>
<dbReference type="GO" id="GO:0005654">
    <property type="term" value="C:nucleoplasm"/>
    <property type="evidence" value="ECO:0000304"/>
    <property type="project" value="Reactome"/>
</dbReference>
<dbReference type="GO" id="GO:0005634">
    <property type="term" value="C:nucleus"/>
    <property type="evidence" value="ECO:0000314"/>
    <property type="project" value="MGI"/>
</dbReference>
<dbReference type="GO" id="GO:0003677">
    <property type="term" value="F:DNA binding"/>
    <property type="evidence" value="ECO:0000314"/>
    <property type="project" value="MGI"/>
</dbReference>
<dbReference type="GO" id="GO:0003700">
    <property type="term" value="F:DNA-binding transcription factor activity"/>
    <property type="evidence" value="ECO:0000314"/>
    <property type="project" value="UniProtKB"/>
</dbReference>
<dbReference type="GO" id="GO:0001227">
    <property type="term" value="F:DNA-binding transcription repressor activity, RNA polymerase II-specific"/>
    <property type="evidence" value="ECO:0007669"/>
    <property type="project" value="Ensembl"/>
</dbReference>
<dbReference type="GO" id="GO:0043565">
    <property type="term" value="F:sequence-specific DNA binding"/>
    <property type="evidence" value="ECO:0000314"/>
    <property type="project" value="UniProtKB"/>
</dbReference>
<dbReference type="GO" id="GO:0000976">
    <property type="term" value="F:transcription cis-regulatory region binding"/>
    <property type="evidence" value="ECO:0000314"/>
    <property type="project" value="UniProtKB"/>
</dbReference>
<dbReference type="GO" id="GO:0006355">
    <property type="term" value="P:regulation of DNA-templated transcription"/>
    <property type="evidence" value="ECO:0000314"/>
    <property type="project" value="MGI"/>
</dbReference>
<dbReference type="CDD" id="cd14717">
    <property type="entry name" value="bZIP_Maf_small"/>
    <property type="match status" value="1"/>
</dbReference>
<dbReference type="FunFam" id="1.20.5.170:FF:000011">
    <property type="entry name" value="Transcription factor MafG, putative"/>
    <property type="match status" value="1"/>
</dbReference>
<dbReference type="Gene3D" id="1.20.5.170">
    <property type="match status" value="1"/>
</dbReference>
<dbReference type="InterPro" id="IPR004827">
    <property type="entry name" value="bZIP"/>
</dbReference>
<dbReference type="InterPro" id="IPR004826">
    <property type="entry name" value="bZIP_Maf"/>
</dbReference>
<dbReference type="InterPro" id="IPR046347">
    <property type="entry name" value="bZIP_sf"/>
</dbReference>
<dbReference type="InterPro" id="IPR008917">
    <property type="entry name" value="TF_DNA-bd_sf"/>
</dbReference>
<dbReference type="InterPro" id="IPR024874">
    <property type="entry name" value="Transcription_factor_Maf_fam"/>
</dbReference>
<dbReference type="PANTHER" id="PTHR10129">
    <property type="entry name" value="TRANSCRIPTION FACTOR MAF"/>
    <property type="match status" value="1"/>
</dbReference>
<dbReference type="PANTHER" id="PTHR10129:SF26">
    <property type="entry name" value="TRANSCRIPTION FACTOR MAFK"/>
    <property type="match status" value="1"/>
</dbReference>
<dbReference type="Pfam" id="PF03131">
    <property type="entry name" value="bZIP_Maf"/>
    <property type="match status" value="1"/>
</dbReference>
<dbReference type="SMART" id="SM00338">
    <property type="entry name" value="BRLZ"/>
    <property type="match status" value="1"/>
</dbReference>
<dbReference type="SUPFAM" id="SSF47454">
    <property type="entry name" value="A DNA-binding domain in eukaryotic transcription factors"/>
    <property type="match status" value="1"/>
</dbReference>
<dbReference type="SUPFAM" id="SSF57959">
    <property type="entry name" value="Leucine zipper domain"/>
    <property type="match status" value="1"/>
</dbReference>
<dbReference type="PROSITE" id="PS50217">
    <property type="entry name" value="BZIP"/>
    <property type="match status" value="1"/>
</dbReference>
<proteinExistence type="evidence at protein level"/>
<accession>Q61827</accession>
<accession>Q60600</accession>
<reference key="1">
    <citation type="journal article" date="1995" name="J. Biol. Chem.">
        <title>Activity and expression of murine small Maf family protein MafK.</title>
        <authorList>
            <person name="Igarashi K."/>
            <person name="Itoh K."/>
            <person name="Motohashi H."/>
            <person name="Hayashi N."/>
            <person name="Matuzaki Y."/>
            <person name="Nakauchi H."/>
            <person name="Nishizawa M."/>
            <person name="Yamamoto M."/>
        </authorList>
    </citation>
    <scope>NUCLEOTIDE SEQUENCE [MRNA]</scope>
    <source>
        <tissue>Liver</tissue>
    </source>
</reference>
<reference key="2">
    <citation type="journal article" date="1993" name="Proc. Natl. Acad. Sci. U.S.A.">
        <title>The ubiquitous subunit of erythroid transcription factor NF-E2 is a small basic-leucine zipper protein related to the v-maf oncogene.</title>
        <authorList>
            <person name="Andrews N.C."/>
            <person name="Kotkow K.J."/>
            <person name="Ney P.A."/>
            <person name="Erdjument-Bromage H."/>
            <person name="Tempst P."/>
            <person name="Orkin S.H."/>
        </authorList>
    </citation>
    <scope>NUCLEOTIDE SEQUENCE [MRNA]</scope>
    <source>
        <strain>DBA</strain>
        <tissue>Hematopoietic</tissue>
    </source>
</reference>
<reference key="3">
    <citation type="journal article" date="2004" name="Genome Res.">
        <title>The status, quality, and expansion of the NIH full-length cDNA project: the Mammalian Gene Collection (MGC).</title>
        <authorList>
            <consortium name="The MGC Project Team"/>
        </authorList>
    </citation>
    <scope>NUCLEOTIDE SEQUENCE [LARGE SCALE MRNA]</scope>
    <source>
        <strain>FVB/N</strain>
        <tissue>Salivary gland</tissue>
    </source>
</reference>
<reference key="4">
    <citation type="journal article" date="1997" name="Biochem. Biophys. Res. Commun.">
        <title>An Nrf2/small Maf heterodimer mediates the induction of phase II detoxifying enzyme genes through antioxidant response elements.</title>
        <authorList>
            <person name="Itoh K."/>
            <person name="Chiba T."/>
            <person name="Takahashi S."/>
            <person name="Ishii T."/>
            <person name="Igarashi K."/>
            <person name="Katoh Y."/>
            <person name="Oyake T."/>
            <person name="Hayashi N."/>
            <person name="Satoh K."/>
            <person name="Hatayama I."/>
            <person name="Yamamoto M."/>
            <person name="Nabeshima Y."/>
        </authorList>
    </citation>
    <scope>FUNCTION</scope>
    <scope>INTERACTION WITH NFE2L2</scope>
</reference>
<reference key="5">
    <citation type="journal article" date="2010" name="Cell">
        <title>A tissue-specific atlas of mouse protein phosphorylation and expression.</title>
        <authorList>
            <person name="Huttlin E.L."/>
            <person name="Jedrychowski M.P."/>
            <person name="Elias J.E."/>
            <person name="Goswami T."/>
            <person name="Rad R."/>
            <person name="Beausoleil S.A."/>
            <person name="Villen J."/>
            <person name="Haas W."/>
            <person name="Sowa M.E."/>
            <person name="Gygi S.P."/>
        </authorList>
    </citation>
    <scope>PHOSPHORYLATION [LARGE SCALE ANALYSIS] AT SER-25</scope>
    <scope>IDENTIFICATION BY MASS SPECTROMETRY [LARGE SCALE ANALYSIS]</scope>
    <source>
        <tissue>Kidney</tissue>
        <tissue>Lung</tissue>
        <tissue>Pancreas</tissue>
        <tissue>Spleen</tissue>
    </source>
</reference>
<protein>
    <recommendedName>
        <fullName>Transcription factor MafK</fullName>
    </recommendedName>
    <alternativeName>
        <fullName>Erythroid transcription factor NF-E2 p18 subunit</fullName>
    </alternativeName>
</protein>
<gene>
    <name type="primary">Mafk</name>
    <name type="synonym">Nfe2u</name>
</gene>
<evidence type="ECO:0000250" key="1">
    <source>
        <dbReference type="UniProtKB" id="O60675"/>
    </source>
</evidence>
<evidence type="ECO:0000255" key="2">
    <source>
        <dbReference type="PROSITE-ProRule" id="PRU00978"/>
    </source>
</evidence>
<evidence type="ECO:0000269" key="3">
    <source>
    </source>
</evidence>
<evidence type="ECO:0000305" key="4"/>
<evidence type="ECO:0007744" key="5">
    <source>
    </source>
</evidence>
<keyword id="KW-0238">DNA-binding</keyword>
<keyword id="KW-1017">Isopeptide bond</keyword>
<keyword id="KW-0539">Nucleus</keyword>
<keyword id="KW-0597">Phosphoprotein</keyword>
<keyword id="KW-1185">Reference proteome</keyword>
<keyword id="KW-0678">Repressor</keyword>
<keyword id="KW-0804">Transcription</keyword>
<keyword id="KW-0805">Transcription regulation</keyword>
<keyword id="KW-0832">Ubl conjugation</keyword>